<protein>
    <recommendedName>
        <fullName evidence="1">4-hydroxy-tetrahydrodipicolinate synthase</fullName>
        <shortName evidence="1">HTPA synthase</shortName>
        <ecNumber evidence="1">4.3.3.7</ecNumber>
    </recommendedName>
</protein>
<name>DAPA_LISIN</name>
<evidence type="ECO:0000255" key="1">
    <source>
        <dbReference type="HAMAP-Rule" id="MF_00418"/>
    </source>
</evidence>
<evidence type="ECO:0000305" key="2"/>
<comment type="function">
    <text evidence="1">Catalyzes the condensation of (S)-aspartate-beta-semialdehyde [(S)-ASA] and pyruvate to 4-hydroxy-tetrahydrodipicolinate (HTPA).</text>
</comment>
<comment type="catalytic activity">
    <reaction evidence="1">
        <text>L-aspartate 4-semialdehyde + pyruvate = (2S,4S)-4-hydroxy-2,3,4,5-tetrahydrodipicolinate + H2O + H(+)</text>
        <dbReference type="Rhea" id="RHEA:34171"/>
        <dbReference type="ChEBI" id="CHEBI:15361"/>
        <dbReference type="ChEBI" id="CHEBI:15377"/>
        <dbReference type="ChEBI" id="CHEBI:15378"/>
        <dbReference type="ChEBI" id="CHEBI:67139"/>
        <dbReference type="ChEBI" id="CHEBI:537519"/>
        <dbReference type="EC" id="4.3.3.7"/>
    </reaction>
</comment>
<comment type="pathway">
    <text evidence="1">Amino-acid biosynthesis; L-lysine biosynthesis via DAP pathway; (S)-tetrahydrodipicolinate from L-aspartate: step 3/4.</text>
</comment>
<comment type="subunit">
    <text evidence="1">Homotetramer; dimer of dimers.</text>
</comment>
<comment type="subcellular location">
    <subcellularLocation>
        <location evidence="1">Cytoplasm</location>
    </subcellularLocation>
</comment>
<comment type="similarity">
    <text evidence="1">Belongs to the DapA family.</text>
</comment>
<comment type="caution">
    <text evidence="2">Was originally thought to be a dihydrodipicolinate synthase (DHDPS), catalyzing the condensation of (S)-aspartate-beta-semialdehyde [(S)-ASA] and pyruvate to dihydrodipicolinate (DHDP). However, it was shown in E.coli that the product of the enzymatic reaction is not dihydrodipicolinate but in fact (4S)-4-hydroxy-2,3,4,5-tetrahydro-(2S)-dipicolinic acid (HTPA), and that the consecutive dehydration reaction leading to DHDP is not spontaneous but catalyzed by DapB.</text>
</comment>
<sequence length="293" mass="31231">MDLGKVITAMVTPIHPEKNKVCKKRIHHLVNHLIDNGSDGLVIAGTTGESPTLSHDEKMKLFRQVVETNAGRAKLIAGTGSNNTAETIAFTKEVAELGGIDAVLVVAPYYNKPNQDGLYAHFVAVAEASDLPVVIYNIPGRSVVNIEPETIIRLAKLPNIIGVKESSGNLDNISKIIAETSDDFLVYSGDDSLTLPILAVGGNGVISVASHVVGNEMQEMMQAYESGDVKKAASIHRSLLPLMNGLFSVPNPAPTKYLLNQQGISVGPVRLPLVDLNAEQGTKLQAILEGLSK</sequence>
<gene>
    <name evidence="1" type="primary">dapA</name>
    <name type="ordered locus">lin1474</name>
</gene>
<organism>
    <name type="scientific">Listeria innocua serovar 6a (strain ATCC BAA-680 / CLIP 11262)</name>
    <dbReference type="NCBI Taxonomy" id="272626"/>
    <lineage>
        <taxon>Bacteria</taxon>
        <taxon>Bacillati</taxon>
        <taxon>Bacillota</taxon>
        <taxon>Bacilli</taxon>
        <taxon>Bacillales</taxon>
        <taxon>Listeriaceae</taxon>
        <taxon>Listeria</taxon>
    </lineage>
</organism>
<dbReference type="EC" id="4.3.3.7" evidence="1"/>
<dbReference type="EMBL" id="AL596168">
    <property type="protein sequence ID" value="CAC96705.1"/>
    <property type="molecule type" value="Genomic_DNA"/>
</dbReference>
<dbReference type="PIR" id="AI1616">
    <property type="entry name" value="AI1616"/>
</dbReference>
<dbReference type="RefSeq" id="WP_010991550.1">
    <property type="nucleotide sequence ID" value="NC_003212.1"/>
</dbReference>
<dbReference type="SMR" id="Q92BS0"/>
<dbReference type="STRING" id="272626.gene:17565805"/>
<dbReference type="GeneID" id="93234855"/>
<dbReference type="KEGG" id="lin:lin1474"/>
<dbReference type="eggNOG" id="COG0329">
    <property type="taxonomic scope" value="Bacteria"/>
</dbReference>
<dbReference type="HOGENOM" id="CLU_049343_7_1_9"/>
<dbReference type="OrthoDB" id="9782828at2"/>
<dbReference type="UniPathway" id="UPA00034">
    <property type="reaction ID" value="UER00017"/>
</dbReference>
<dbReference type="Proteomes" id="UP000002513">
    <property type="component" value="Chromosome"/>
</dbReference>
<dbReference type="GO" id="GO:0005829">
    <property type="term" value="C:cytosol"/>
    <property type="evidence" value="ECO:0007669"/>
    <property type="project" value="TreeGrafter"/>
</dbReference>
<dbReference type="GO" id="GO:0008840">
    <property type="term" value="F:4-hydroxy-tetrahydrodipicolinate synthase activity"/>
    <property type="evidence" value="ECO:0007669"/>
    <property type="project" value="UniProtKB-UniRule"/>
</dbReference>
<dbReference type="GO" id="GO:0019877">
    <property type="term" value="P:diaminopimelate biosynthetic process"/>
    <property type="evidence" value="ECO:0007669"/>
    <property type="project" value="UniProtKB-UniRule"/>
</dbReference>
<dbReference type="GO" id="GO:0009089">
    <property type="term" value="P:lysine biosynthetic process via diaminopimelate"/>
    <property type="evidence" value="ECO:0007669"/>
    <property type="project" value="UniProtKB-UniRule"/>
</dbReference>
<dbReference type="CDD" id="cd00950">
    <property type="entry name" value="DHDPS"/>
    <property type="match status" value="1"/>
</dbReference>
<dbReference type="Gene3D" id="3.20.20.70">
    <property type="entry name" value="Aldolase class I"/>
    <property type="match status" value="1"/>
</dbReference>
<dbReference type="HAMAP" id="MF_00418">
    <property type="entry name" value="DapA"/>
    <property type="match status" value="1"/>
</dbReference>
<dbReference type="InterPro" id="IPR013785">
    <property type="entry name" value="Aldolase_TIM"/>
</dbReference>
<dbReference type="InterPro" id="IPR005263">
    <property type="entry name" value="DapA"/>
</dbReference>
<dbReference type="InterPro" id="IPR002220">
    <property type="entry name" value="DapA-like"/>
</dbReference>
<dbReference type="InterPro" id="IPR020625">
    <property type="entry name" value="Schiff_base-form_aldolases_AS"/>
</dbReference>
<dbReference type="InterPro" id="IPR020624">
    <property type="entry name" value="Schiff_base-form_aldolases_CS"/>
</dbReference>
<dbReference type="NCBIfam" id="TIGR00674">
    <property type="entry name" value="dapA"/>
    <property type="match status" value="1"/>
</dbReference>
<dbReference type="PANTHER" id="PTHR12128:SF66">
    <property type="entry name" value="4-HYDROXY-2-OXOGLUTARATE ALDOLASE, MITOCHONDRIAL"/>
    <property type="match status" value="1"/>
</dbReference>
<dbReference type="PANTHER" id="PTHR12128">
    <property type="entry name" value="DIHYDRODIPICOLINATE SYNTHASE"/>
    <property type="match status" value="1"/>
</dbReference>
<dbReference type="Pfam" id="PF00701">
    <property type="entry name" value="DHDPS"/>
    <property type="match status" value="1"/>
</dbReference>
<dbReference type="PIRSF" id="PIRSF001365">
    <property type="entry name" value="DHDPS"/>
    <property type="match status" value="1"/>
</dbReference>
<dbReference type="PRINTS" id="PR00146">
    <property type="entry name" value="DHPICSNTHASE"/>
</dbReference>
<dbReference type="SMART" id="SM01130">
    <property type="entry name" value="DHDPS"/>
    <property type="match status" value="1"/>
</dbReference>
<dbReference type="SUPFAM" id="SSF51569">
    <property type="entry name" value="Aldolase"/>
    <property type="match status" value="1"/>
</dbReference>
<dbReference type="PROSITE" id="PS00665">
    <property type="entry name" value="DHDPS_1"/>
    <property type="match status" value="1"/>
</dbReference>
<dbReference type="PROSITE" id="PS00666">
    <property type="entry name" value="DHDPS_2"/>
    <property type="match status" value="1"/>
</dbReference>
<reference key="1">
    <citation type="journal article" date="2001" name="Science">
        <title>Comparative genomics of Listeria species.</title>
        <authorList>
            <person name="Glaser P."/>
            <person name="Frangeul L."/>
            <person name="Buchrieser C."/>
            <person name="Rusniok C."/>
            <person name="Amend A."/>
            <person name="Baquero F."/>
            <person name="Berche P."/>
            <person name="Bloecker H."/>
            <person name="Brandt P."/>
            <person name="Chakraborty T."/>
            <person name="Charbit A."/>
            <person name="Chetouani F."/>
            <person name="Couve E."/>
            <person name="de Daruvar A."/>
            <person name="Dehoux P."/>
            <person name="Domann E."/>
            <person name="Dominguez-Bernal G."/>
            <person name="Duchaud E."/>
            <person name="Durant L."/>
            <person name="Dussurget O."/>
            <person name="Entian K.-D."/>
            <person name="Fsihi H."/>
            <person name="Garcia-del Portillo F."/>
            <person name="Garrido P."/>
            <person name="Gautier L."/>
            <person name="Goebel W."/>
            <person name="Gomez-Lopez N."/>
            <person name="Hain T."/>
            <person name="Hauf J."/>
            <person name="Jackson D."/>
            <person name="Jones L.-M."/>
            <person name="Kaerst U."/>
            <person name="Kreft J."/>
            <person name="Kuhn M."/>
            <person name="Kunst F."/>
            <person name="Kurapkat G."/>
            <person name="Madueno E."/>
            <person name="Maitournam A."/>
            <person name="Mata Vicente J."/>
            <person name="Ng E."/>
            <person name="Nedjari H."/>
            <person name="Nordsiek G."/>
            <person name="Novella S."/>
            <person name="de Pablos B."/>
            <person name="Perez-Diaz J.-C."/>
            <person name="Purcell R."/>
            <person name="Remmel B."/>
            <person name="Rose M."/>
            <person name="Schlueter T."/>
            <person name="Simoes N."/>
            <person name="Tierrez A."/>
            <person name="Vazquez-Boland J.-A."/>
            <person name="Voss H."/>
            <person name="Wehland J."/>
            <person name="Cossart P."/>
        </authorList>
    </citation>
    <scope>NUCLEOTIDE SEQUENCE [LARGE SCALE GENOMIC DNA]</scope>
    <source>
        <strain>ATCC BAA-680 / CLIP 11262</strain>
    </source>
</reference>
<accession>Q92BS0</accession>
<feature type="chain" id="PRO_0000103123" description="4-hydroxy-tetrahydrodipicolinate synthase">
    <location>
        <begin position="1"/>
        <end position="293"/>
    </location>
</feature>
<feature type="active site" description="Proton donor/acceptor" evidence="1">
    <location>
        <position position="136"/>
    </location>
</feature>
<feature type="active site" description="Schiff-base intermediate with substrate" evidence="1">
    <location>
        <position position="164"/>
    </location>
</feature>
<feature type="binding site" evidence="1">
    <location>
        <position position="47"/>
    </location>
    <ligand>
        <name>pyruvate</name>
        <dbReference type="ChEBI" id="CHEBI:15361"/>
    </ligand>
</feature>
<feature type="binding site" evidence="1">
    <location>
        <position position="206"/>
    </location>
    <ligand>
        <name>pyruvate</name>
        <dbReference type="ChEBI" id="CHEBI:15361"/>
    </ligand>
</feature>
<feature type="site" description="Part of a proton relay during catalysis" evidence="1">
    <location>
        <position position="46"/>
    </location>
</feature>
<feature type="site" description="Part of a proton relay during catalysis" evidence="1">
    <location>
        <position position="110"/>
    </location>
</feature>
<proteinExistence type="inferred from homology"/>
<keyword id="KW-0028">Amino-acid biosynthesis</keyword>
<keyword id="KW-0963">Cytoplasm</keyword>
<keyword id="KW-0220">Diaminopimelate biosynthesis</keyword>
<keyword id="KW-0456">Lyase</keyword>
<keyword id="KW-0457">Lysine biosynthesis</keyword>
<keyword id="KW-0704">Schiff base</keyword>